<evidence type="ECO:0000305" key="1"/>
<reference key="1">
    <citation type="journal article" date="1996" name="Nucleic Acids Res.">
        <title>The complete nucleotide sequence of bacteriophage HP1 DNA.</title>
        <authorList>
            <person name="Esposito D."/>
            <person name="Fitzmaurice W.P."/>
            <person name="Benjamin R.C."/>
            <person name="Goodman S.D."/>
            <person name="Waldman A.S."/>
            <person name="Scocca J.J."/>
        </authorList>
    </citation>
    <scope>NUCLEOTIDE SEQUENCE [LARGE SCALE GENOMIC DNA]</scope>
</reference>
<organismHost>
    <name type="scientific">Haemophilus influenzae</name>
    <dbReference type="NCBI Taxonomy" id="727"/>
</organismHost>
<proteinExistence type="predicted"/>
<dbReference type="EMBL" id="U24159">
    <property type="protein sequence ID" value="AAB09204.1"/>
    <property type="molecule type" value="Genomic_DNA"/>
</dbReference>
<dbReference type="PIR" id="S69525">
    <property type="entry name" value="S69525"/>
</dbReference>
<dbReference type="RefSeq" id="NP_043488.1">
    <property type="nucleotide sequence ID" value="NC_001697.1"/>
</dbReference>
<dbReference type="GeneID" id="1261133"/>
<dbReference type="KEGG" id="vg:1261133"/>
<dbReference type="Proteomes" id="UP000001713">
    <property type="component" value="Segment"/>
</dbReference>
<dbReference type="GO" id="GO:0003677">
    <property type="term" value="F:DNA binding"/>
    <property type="evidence" value="ECO:0007669"/>
    <property type="project" value="UniProtKB-KW"/>
</dbReference>
<dbReference type="GO" id="GO:0004519">
    <property type="term" value="F:endonuclease activity"/>
    <property type="evidence" value="ECO:0007669"/>
    <property type="project" value="UniProtKB-KW"/>
</dbReference>
<dbReference type="GO" id="GO:0019069">
    <property type="term" value="P:viral capsid assembly"/>
    <property type="evidence" value="ECO:0007669"/>
    <property type="project" value="InterPro"/>
</dbReference>
<dbReference type="InterPro" id="IPR010270">
    <property type="entry name" value="Phage_P2_GpM"/>
</dbReference>
<dbReference type="Pfam" id="PF05944">
    <property type="entry name" value="Phage_term_smal"/>
    <property type="match status" value="1"/>
</dbReference>
<protein>
    <recommendedName>
        <fullName>Probable terminase, endonuclease subunit</fullName>
    </recommendedName>
    <alternativeName>
        <fullName>ORF19</fullName>
    </alternativeName>
</protein>
<feature type="chain" id="PRO_0000165310" description="Probable terminase, endonuclease subunit">
    <location>
        <begin position="1"/>
        <end position="281"/>
    </location>
</feature>
<name>VPM_BPHC1</name>
<keyword id="KW-0238">DNA-binding</keyword>
<keyword id="KW-0255">Endonuclease</keyword>
<keyword id="KW-0378">Hydrolase</keyword>
<keyword id="KW-0540">Nuclease</keyword>
<keyword id="KW-1185">Reference proteome</keyword>
<keyword id="KW-0231">Viral genome packaging</keyword>
<keyword id="KW-1188">Viral release from host cell</keyword>
<organism>
    <name type="scientific">Haemophilus phage HP1 (strain HP1c1)</name>
    <name type="common">Bacteriophage HP1</name>
    <dbReference type="NCBI Taxonomy" id="1289570"/>
    <lineage>
        <taxon>Viruses</taxon>
        <taxon>Duplodnaviria</taxon>
        <taxon>Heunggongvirae</taxon>
        <taxon>Uroviricota</taxon>
        <taxon>Caudoviricetes</taxon>
        <taxon>Peduoviridae</taxon>
        <taxon>Hpunavirus</taxon>
        <taxon>Haemophilus phage HP1</taxon>
    </lineage>
</organism>
<sequence length="281" mass="31834">MGMRDFQRQMQALAEINQVSESITQQSAVATHGNDYAVLEIALQNDVNAVRAFSTRAEKLDYKRDRFLPKWLPFVNEYLDKGAIYQNDYLVYCIVYLFDIADFDRALSLAEKAIEQNQSMPQGWQTTLPNFVADQIYNWTDKTASAGQSVEPYFSQTFKNVATQWKLHEIVTAKWLKLAAALLLRSPQGKVQASGIDDAETLVLAIQLCNRAFQLNQKAGVKNMIERCVMRLNALAKSGDYDQNRLPKVAGLSLEKQQIDFDLVIEKLTARPLQNSEEGNV</sequence>
<accession>P51721</accession>
<comment type="similarity">
    <text evidence="1">To phage P2 protein M.</text>
</comment>